<protein>
    <recommendedName>
        <fullName evidence="2">GDP-Man:Man(3)GlcNAc(2)-PP-Dol alpha-1,2-mannosyltransferase</fullName>
        <ecNumber evidence="2">2.4.1.131</ecNumber>
    </recommendedName>
    <alternativeName>
        <fullName evidence="7">Asparagine-linked glycosylation protein 11 homolog</fullName>
    </alternativeName>
    <alternativeName>
        <fullName>Glycolipid 2-alpha-mannosyltransferase</fullName>
    </alternativeName>
</protein>
<proteinExistence type="evidence at transcript level"/>
<reference key="1">
    <citation type="journal article" date="2005" name="Science">
        <title>The transcriptional landscape of the mammalian genome.</title>
        <authorList>
            <person name="Carninci P."/>
            <person name="Kasukawa T."/>
            <person name="Katayama S."/>
            <person name="Gough J."/>
            <person name="Frith M.C."/>
            <person name="Maeda N."/>
            <person name="Oyama R."/>
            <person name="Ravasi T."/>
            <person name="Lenhard B."/>
            <person name="Wells C."/>
            <person name="Kodzius R."/>
            <person name="Shimokawa K."/>
            <person name="Bajic V.B."/>
            <person name="Brenner S.E."/>
            <person name="Batalov S."/>
            <person name="Forrest A.R."/>
            <person name="Zavolan M."/>
            <person name="Davis M.J."/>
            <person name="Wilming L.G."/>
            <person name="Aidinis V."/>
            <person name="Allen J.E."/>
            <person name="Ambesi-Impiombato A."/>
            <person name="Apweiler R."/>
            <person name="Aturaliya R.N."/>
            <person name="Bailey T.L."/>
            <person name="Bansal M."/>
            <person name="Baxter L."/>
            <person name="Beisel K.W."/>
            <person name="Bersano T."/>
            <person name="Bono H."/>
            <person name="Chalk A.M."/>
            <person name="Chiu K.P."/>
            <person name="Choudhary V."/>
            <person name="Christoffels A."/>
            <person name="Clutterbuck D.R."/>
            <person name="Crowe M.L."/>
            <person name="Dalla E."/>
            <person name="Dalrymple B.P."/>
            <person name="de Bono B."/>
            <person name="Della Gatta G."/>
            <person name="di Bernardo D."/>
            <person name="Down T."/>
            <person name="Engstrom P."/>
            <person name="Fagiolini M."/>
            <person name="Faulkner G."/>
            <person name="Fletcher C.F."/>
            <person name="Fukushima T."/>
            <person name="Furuno M."/>
            <person name="Futaki S."/>
            <person name="Gariboldi M."/>
            <person name="Georgii-Hemming P."/>
            <person name="Gingeras T.R."/>
            <person name="Gojobori T."/>
            <person name="Green R.E."/>
            <person name="Gustincich S."/>
            <person name="Harbers M."/>
            <person name="Hayashi Y."/>
            <person name="Hensch T.K."/>
            <person name="Hirokawa N."/>
            <person name="Hill D."/>
            <person name="Huminiecki L."/>
            <person name="Iacono M."/>
            <person name="Ikeo K."/>
            <person name="Iwama A."/>
            <person name="Ishikawa T."/>
            <person name="Jakt M."/>
            <person name="Kanapin A."/>
            <person name="Katoh M."/>
            <person name="Kawasawa Y."/>
            <person name="Kelso J."/>
            <person name="Kitamura H."/>
            <person name="Kitano H."/>
            <person name="Kollias G."/>
            <person name="Krishnan S.P."/>
            <person name="Kruger A."/>
            <person name="Kummerfeld S.K."/>
            <person name="Kurochkin I.V."/>
            <person name="Lareau L.F."/>
            <person name="Lazarevic D."/>
            <person name="Lipovich L."/>
            <person name="Liu J."/>
            <person name="Liuni S."/>
            <person name="McWilliam S."/>
            <person name="Madan Babu M."/>
            <person name="Madera M."/>
            <person name="Marchionni L."/>
            <person name="Matsuda H."/>
            <person name="Matsuzawa S."/>
            <person name="Miki H."/>
            <person name="Mignone F."/>
            <person name="Miyake S."/>
            <person name="Morris K."/>
            <person name="Mottagui-Tabar S."/>
            <person name="Mulder N."/>
            <person name="Nakano N."/>
            <person name="Nakauchi H."/>
            <person name="Ng P."/>
            <person name="Nilsson R."/>
            <person name="Nishiguchi S."/>
            <person name="Nishikawa S."/>
            <person name="Nori F."/>
            <person name="Ohara O."/>
            <person name="Okazaki Y."/>
            <person name="Orlando V."/>
            <person name="Pang K.C."/>
            <person name="Pavan W.J."/>
            <person name="Pavesi G."/>
            <person name="Pesole G."/>
            <person name="Petrovsky N."/>
            <person name="Piazza S."/>
            <person name="Reed J."/>
            <person name="Reid J.F."/>
            <person name="Ring B.Z."/>
            <person name="Ringwald M."/>
            <person name="Rost B."/>
            <person name="Ruan Y."/>
            <person name="Salzberg S.L."/>
            <person name="Sandelin A."/>
            <person name="Schneider C."/>
            <person name="Schoenbach C."/>
            <person name="Sekiguchi K."/>
            <person name="Semple C.A."/>
            <person name="Seno S."/>
            <person name="Sessa L."/>
            <person name="Sheng Y."/>
            <person name="Shibata Y."/>
            <person name="Shimada H."/>
            <person name="Shimada K."/>
            <person name="Silva D."/>
            <person name="Sinclair B."/>
            <person name="Sperling S."/>
            <person name="Stupka E."/>
            <person name="Sugiura K."/>
            <person name="Sultana R."/>
            <person name="Takenaka Y."/>
            <person name="Taki K."/>
            <person name="Tammoja K."/>
            <person name="Tan S.L."/>
            <person name="Tang S."/>
            <person name="Taylor M.S."/>
            <person name="Tegner J."/>
            <person name="Teichmann S.A."/>
            <person name="Ueda H.R."/>
            <person name="van Nimwegen E."/>
            <person name="Verardo R."/>
            <person name="Wei C.L."/>
            <person name="Yagi K."/>
            <person name="Yamanishi H."/>
            <person name="Zabarovsky E."/>
            <person name="Zhu S."/>
            <person name="Zimmer A."/>
            <person name="Hide W."/>
            <person name="Bult C."/>
            <person name="Grimmond S.M."/>
            <person name="Teasdale R.D."/>
            <person name="Liu E.T."/>
            <person name="Brusic V."/>
            <person name="Quackenbush J."/>
            <person name="Wahlestedt C."/>
            <person name="Mattick J.S."/>
            <person name="Hume D.A."/>
            <person name="Kai C."/>
            <person name="Sasaki D."/>
            <person name="Tomaru Y."/>
            <person name="Fukuda S."/>
            <person name="Kanamori-Katayama M."/>
            <person name="Suzuki M."/>
            <person name="Aoki J."/>
            <person name="Arakawa T."/>
            <person name="Iida J."/>
            <person name="Imamura K."/>
            <person name="Itoh M."/>
            <person name="Kato T."/>
            <person name="Kawaji H."/>
            <person name="Kawagashira N."/>
            <person name="Kawashima T."/>
            <person name="Kojima M."/>
            <person name="Kondo S."/>
            <person name="Konno H."/>
            <person name="Nakano K."/>
            <person name="Ninomiya N."/>
            <person name="Nishio T."/>
            <person name="Okada M."/>
            <person name="Plessy C."/>
            <person name="Shibata K."/>
            <person name="Shiraki T."/>
            <person name="Suzuki S."/>
            <person name="Tagami M."/>
            <person name="Waki K."/>
            <person name="Watahiki A."/>
            <person name="Okamura-Oho Y."/>
            <person name="Suzuki H."/>
            <person name="Kawai J."/>
            <person name="Hayashizaki Y."/>
        </authorList>
    </citation>
    <scope>NUCLEOTIDE SEQUENCE [LARGE SCALE MRNA] (ISOFORMS 1 AND 2)</scope>
    <source>
        <strain>C57BL/6J</strain>
        <tissue>Corpora quadrigemina</tissue>
        <tissue>Embryo</tissue>
    </source>
</reference>
<reference key="2">
    <citation type="journal article" date="2004" name="Genome Res.">
        <title>The status, quality, and expansion of the NIH full-length cDNA project: the Mammalian Gene Collection (MGC).</title>
        <authorList>
            <consortium name="The MGC Project Team"/>
        </authorList>
    </citation>
    <scope>NUCLEOTIDE SEQUENCE [LARGE SCALE MRNA] (ISOFORM 3)</scope>
    <source>
        <strain>C57BL/6J</strain>
        <tissue>Brain</tissue>
    </source>
</reference>
<comment type="function">
    <text evidence="2">GDP-Man:Man(3)GlcNAc(2)-PP-Dol alpha-1,2-mannosyltransferase that operates in the biosynthetic pathway of dolichol-linked oligosaccharides, the glycan precursors employed in protein asparagine (N)-glycosylation. The assembly of dolichol-linked oligosaccharides begins on the cytosolic side of the endoplasmic reticulum membrane and finishes in its lumen. The sequential addition of sugars to dolichol pyrophosphate produces dolichol-linked oligosaccharides containing fourteen sugars, including two GlcNAcs, nine mannoses and three glucoses. Once assembled, the oligosaccharide is transferred from the lipid to nascent proteins by oligosaccharyltransferases. Catalyzes, on the cytoplasmic face of the endoplasmic reticulum, the addition of the fourth and fifth mannose residues to the dolichol-linked oligosaccharide chain, to produce Man(5)GlcNAc(2)-PP-dolichol core oligosaccharide. Man(5)GlcNAc(2)-PP-dolichol is a substrate for ALG3, the following enzyme in the biosynthetic pathway.</text>
</comment>
<comment type="catalytic activity">
    <reaction evidence="2">
        <text>an alpha-D-Man-(1-&gt;3)-[alpha-D-Man-(1-&gt;6)]-beta-D-Man-(1-&gt;4)-beta-D-GlcNAc-(1-&gt;4)-alpha-D-GlcNAc-diphospho-di-trans,poly-cis-dolichol + 2 GDP-alpha-D-mannose = an alpha-D-Man-(1-&gt;2)-alpha-D-Man-(1-&gt;2)-alpha-D-Man-(1-&gt;3)-[alpha-D-Man-(1-&gt;6)]-beta-D-Man-(1-&gt;4)-beta-D-GlcNAc-(1-&gt;4)-alpha-D-GlcNAc-diphospho-di-trans,poly-cis-dolichol + 2 GDP + 2 H(+)</text>
        <dbReference type="Rhea" id="RHEA:29523"/>
        <dbReference type="Rhea" id="RHEA-COMP:19515"/>
        <dbReference type="Rhea" id="RHEA-COMP:19516"/>
        <dbReference type="ChEBI" id="CHEBI:15378"/>
        <dbReference type="ChEBI" id="CHEBI:57527"/>
        <dbReference type="ChEBI" id="CHEBI:58189"/>
        <dbReference type="ChEBI" id="CHEBI:132511"/>
        <dbReference type="ChEBI" id="CHEBI:132515"/>
        <dbReference type="EC" id="2.4.1.131"/>
    </reaction>
    <physiologicalReaction direction="left-to-right" evidence="2">
        <dbReference type="Rhea" id="RHEA:29524"/>
    </physiologicalReaction>
</comment>
<comment type="pathway">
    <text evidence="2">Protein modification; protein glycosylation.</text>
</comment>
<comment type="subcellular location">
    <subcellularLocation>
        <location evidence="2">Endoplasmic reticulum membrane</location>
        <topology evidence="1">Single-pass membrane protein</topology>
    </subcellularLocation>
</comment>
<comment type="alternative products">
    <event type="alternative splicing"/>
    <isoform>
        <id>Q3TZM9-1</id>
        <name>1</name>
        <sequence type="displayed"/>
    </isoform>
    <isoform>
        <id>Q3TZM9-2</id>
        <name>2</name>
        <sequence type="described" ref="VSP_026940"/>
    </isoform>
    <isoform>
        <id>Q3TZM9-3</id>
        <name>3</name>
        <sequence type="described" ref="VSP_026941"/>
    </isoform>
</comment>
<comment type="similarity">
    <text evidence="6">Belongs to the glycosyltransferase group 1 family. Glycosyltransferase 4 subfamily.</text>
</comment>
<organism>
    <name type="scientific">Mus musculus</name>
    <name type="common">Mouse</name>
    <dbReference type="NCBI Taxonomy" id="10090"/>
    <lineage>
        <taxon>Eukaryota</taxon>
        <taxon>Metazoa</taxon>
        <taxon>Chordata</taxon>
        <taxon>Craniata</taxon>
        <taxon>Vertebrata</taxon>
        <taxon>Euteleostomi</taxon>
        <taxon>Mammalia</taxon>
        <taxon>Eutheria</taxon>
        <taxon>Euarchontoglires</taxon>
        <taxon>Glires</taxon>
        <taxon>Rodentia</taxon>
        <taxon>Myomorpha</taxon>
        <taxon>Muroidea</taxon>
        <taxon>Muridae</taxon>
        <taxon>Murinae</taxon>
        <taxon>Mus</taxon>
        <taxon>Mus</taxon>
    </lineage>
</organism>
<dbReference type="EC" id="2.4.1.131" evidence="2"/>
<dbReference type="EMBL" id="AK046475">
    <property type="protein sequence ID" value="BAC32746.1"/>
    <property type="molecule type" value="mRNA"/>
</dbReference>
<dbReference type="EMBL" id="AK157746">
    <property type="protein sequence ID" value="BAE34179.1"/>
    <property type="molecule type" value="mRNA"/>
</dbReference>
<dbReference type="EMBL" id="BC061469">
    <property type="protein sequence ID" value="AAH61469.1"/>
    <property type="molecule type" value="mRNA"/>
</dbReference>
<dbReference type="CCDS" id="CCDS40292.1">
    <molecule id="Q3TZM9-2"/>
</dbReference>
<dbReference type="CCDS" id="CCDS57613.1">
    <molecule id="Q3TZM9-1"/>
</dbReference>
<dbReference type="RefSeq" id="NP_001230090.1">
    <molecule id="Q3TZM9-1"/>
    <property type="nucleotide sequence ID" value="NM_001243161.1"/>
</dbReference>
<dbReference type="RefSeq" id="NP_898965.1">
    <molecule id="Q3TZM9-2"/>
    <property type="nucleotide sequence ID" value="NM_183142.4"/>
</dbReference>
<dbReference type="SMR" id="Q3TZM9"/>
<dbReference type="FunCoup" id="Q3TZM9">
    <property type="interactions" value="2207"/>
</dbReference>
<dbReference type="STRING" id="10090.ENSMUSP00000072382"/>
<dbReference type="CAZy" id="GT4">
    <property type="family name" value="Glycosyltransferase Family 4"/>
</dbReference>
<dbReference type="iPTMnet" id="Q3TZM9"/>
<dbReference type="PhosphoSitePlus" id="Q3TZM9"/>
<dbReference type="PaxDb" id="10090-ENSMUSP00000072382"/>
<dbReference type="PeptideAtlas" id="Q3TZM9"/>
<dbReference type="ProteomicsDB" id="296218">
    <molecule id="Q3TZM9-1"/>
</dbReference>
<dbReference type="ProteomicsDB" id="296219">
    <molecule id="Q3TZM9-2"/>
</dbReference>
<dbReference type="ProteomicsDB" id="296220">
    <molecule id="Q3TZM9-3"/>
</dbReference>
<dbReference type="Pumba" id="Q3TZM9"/>
<dbReference type="Antibodypedia" id="49847">
    <property type="antibodies" value="203 antibodies from 19 providers"/>
</dbReference>
<dbReference type="DNASU" id="207958"/>
<dbReference type="Ensembl" id="ENSMUST00000072572.13">
    <molecule id="Q3TZM9-1"/>
    <property type="protein sequence ID" value="ENSMUSP00000072382.7"/>
    <property type="gene ID" value="ENSMUSG00000063362.14"/>
</dbReference>
<dbReference type="Ensembl" id="ENSMUST00000110737.3">
    <molecule id="Q3TZM9-2"/>
    <property type="protein sequence ID" value="ENSMUSP00000106365.3"/>
    <property type="gene ID" value="ENSMUSG00000063362.14"/>
</dbReference>
<dbReference type="GeneID" id="207958"/>
<dbReference type="KEGG" id="mmu:207958"/>
<dbReference type="UCSC" id="uc009lcl.2">
    <molecule id="Q3TZM9-2"/>
    <property type="organism name" value="mouse"/>
</dbReference>
<dbReference type="UCSC" id="uc009lcm.2">
    <molecule id="Q3TZM9-1"/>
    <property type="organism name" value="mouse"/>
</dbReference>
<dbReference type="AGR" id="MGI:2142632"/>
<dbReference type="CTD" id="440138"/>
<dbReference type="MGI" id="MGI:2142632">
    <property type="gene designation" value="Alg11"/>
</dbReference>
<dbReference type="VEuPathDB" id="HostDB:ENSMUSG00000063362"/>
<dbReference type="eggNOG" id="KOG1387">
    <property type="taxonomic scope" value="Eukaryota"/>
</dbReference>
<dbReference type="GeneTree" id="ENSGT00550000075118"/>
<dbReference type="HOGENOM" id="CLU_017896_2_0_1"/>
<dbReference type="InParanoid" id="Q3TZM9"/>
<dbReference type="OMA" id="ARLYGWV"/>
<dbReference type="OrthoDB" id="2276068at2759"/>
<dbReference type="PhylomeDB" id="Q3TZM9"/>
<dbReference type="TreeFam" id="TF313056"/>
<dbReference type="UniPathway" id="UPA00378"/>
<dbReference type="BioGRID-ORCS" id="207958">
    <property type="hits" value="26 hits in 78 CRISPR screens"/>
</dbReference>
<dbReference type="PRO" id="PR:Q3TZM9"/>
<dbReference type="Proteomes" id="UP000000589">
    <property type="component" value="Chromosome 8"/>
</dbReference>
<dbReference type="RNAct" id="Q3TZM9">
    <property type="molecule type" value="protein"/>
</dbReference>
<dbReference type="Bgee" id="ENSMUSG00000063362">
    <property type="expression patterns" value="Expressed in spermatocyte and 226 other cell types or tissues"/>
</dbReference>
<dbReference type="ExpressionAtlas" id="Q3TZM9">
    <property type="expression patterns" value="baseline and differential"/>
</dbReference>
<dbReference type="GO" id="GO:0005789">
    <property type="term" value="C:endoplasmic reticulum membrane"/>
    <property type="evidence" value="ECO:0000250"/>
    <property type="project" value="UniProtKB"/>
</dbReference>
<dbReference type="GO" id="GO:0004377">
    <property type="term" value="F:GDP-Man:Man3GlcNAc2-PP-Dol alpha-1,2-mannosyltransferase activity"/>
    <property type="evidence" value="ECO:0000250"/>
    <property type="project" value="UniProtKB"/>
</dbReference>
<dbReference type="GO" id="GO:0006488">
    <property type="term" value="P:dolichol-linked oligosaccharide biosynthetic process"/>
    <property type="evidence" value="ECO:0000250"/>
    <property type="project" value="UniProtKB"/>
</dbReference>
<dbReference type="GO" id="GO:0006487">
    <property type="term" value="P:protein N-linked glycosylation"/>
    <property type="evidence" value="ECO:0000250"/>
    <property type="project" value="UniProtKB"/>
</dbReference>
<dbReference type="CDD" id="cd03806">
    <property type="entry name" value="GT4_ALG11-like"/>
    <property type="match status" value="1"/>
</dbReference>
<dbReference type="FunFam" id="3.40.50.2000:FF:000076">
    <property type="entry name" value="GDP-Man:Man(3)GlcNAc(2)-PP-Dol alpha-1,2-mannosyltransferase"/>
    <property type="match status" value="1"/>
</dbReference>
<dbReference type="Gene3D" id="3.40.50.2000">
    <property type="entry name" value="Glycogen Phosphorylase B"/>
    <property type="match status" value="1"/>
</dbReference>
<dbReference type="InterPro" id="IPR038013">
    <property type="entry name" value="ALG11"/>
</dbReference>
<dbReference type="InterPro" id="IPR031814">
    <property type="entry name" value="ALG11_N"/>
</dbReference>
<dbReference type="InterPro" id="IPR001296">
    <property type="entry name" value="Glyco_trans_1"/>
</dbReference>
<dbReference type="PANTHER" id="PTHR45919">
    <property type="entry name" value="GDP-MAN:MAN(3)GLCNAC(2)-PP-DOL ALPHA-1,2-MANNOSYLTRANSFERASE"/>
    <property type="match status" value="1"/>
</dbReference>
<dbReference type="PANTHER" id="PTHR45919:SF1">
    <property type="entry name" value="GDP-MAN:MAN(3)GLCNAC(2)-PP-DOL ALPHA-1,2-MANNOSYLTRANSFERASE"/>
    <property type="match status" value="1"/>
</dbReference>
<dbReference type="Pfam" id="PF15924">
    <property type="entry name" value="ALG11_N"/>
    <property type="match status" value="1"/>
</dbReference>
<dbReference type="Pfam" id="PF00534">
    <property type="entry name" value="Glycos_transf_1"/>
    <property type="match status" value="1"/>
</dbReference>
<dbReference type="SUPFAM" id="SSF53756">
    <property type="entry name" value="UDP-Glycosyltransferase/glycogen phosphorylase"/>
    <property type="match status" value="1"/>
</dbReference>
<evidence type="ECO:0000250" key="1">
    <source>
        <dbReference type="UniProtKB" id="P53954"/>
    </source>
</evidence>
<evidence type="ECO:0000250" key="2">
    <source>
        <dbReference type="UniProtKB" id="Q2TAA5"/>
    </source>
</evidence>
<evidence type="ECO:0000255" key="3"/>
<evidence type="ECO:0000303" key="4">
    <source>
    </source>
</evidence>
<evidence type="ECO:0000303" key="5">
    <source>
    </source>
</evidence>
<evidence type="ECO:0000305" key="6"/>
<evidence type="ECO:0000312" key="7">
    <source>
        <dbReference type="MGI" id="MGI:2142632"/>
    </source>
</evidence>
<gene>
    <name evidence="7" type="primary">Alg11</name>
</gene>
<feature type="chain" id="PRO_0000295617" description="GDP-Man:Man(3)GlcNAc(2)-PP-Dol alpha-1,2-mannosyltransferase">
    <location>
        <begin position="1"/>
        <end position="492"/>
    </location>
</feature>
<feature type="topological domain" description="Lumenal" evidence="1">
    <location>
        <begin position="1"/>
        <end position="19"/>
    </location>
</feature>
<feature type="transmembrane region" description="Helical" evidence="3">
    <location>
        <begin position="20"/>
        <end position="40"/>
    </location>
</feature>
<feature type="topological domain" description="Cytoplasmic" evidence="1">
    <location>
        <begin position="41"/>
        <end position="233"/>
    </location>
</feature>
<feature type="intramembrane region" description="Helical" evidence="3">
    <location>
        <begin position="234"/>
        <end position="254"/>
    </location>
</feature>
<feature type="topological domain" description="Cytoplasmic" evidence="1">
    <location>
        <begin position="255"/>
        <end position="399"/>
    </location>
</feature>
<feature type="intramembrane region" description="Helical" evidence="3">
    <location>
        <begin position="400"/>
        <end position="420"/>
    </location>
</feature>
<feature type="topological domain" description="Cytoplasmic" evidence="1">
    <location>
        <begin position="421"/>
        <end position="492"/>
    </location>
</feature>
<feature type="splice variant" id="VSP_026941" description="In isoform 3." evidence="4">
    <location>
        <begin position="1"/>
        <end position="164"/>
    </location>
</feature>
<feature type="splice variant" id="VSP_026940" description="In isoform 2." evidence="5">
    <location>
        <begin position="93"/>
        <end position="134"/>
    </location>
</feature>
<name>ALG11_MOUSE</name>
<keyword id="KW-0025">Alternative splicing</keyword>
<keyword id="KW-0256">Endoplasmic reticulum</keyword>
<keyword id="KW-0328">Glycosyltransferase</keyword>
<keyword id="KW-0472">Membrane</keyword>
<keyword id="KW-1185">Reference proteome</keyword>
<keyword id="KW-0808">Transferase</keyword>
<keyword id="KW-0812">Transmembrane</keyword>
<keyword id="KW-1133">Transmembrane helix</keyword>
<sequence>MAADTGSWCVYAVLRFFYSLFFPGLMICGVLCVYLVIGLWVIRWHLQRKKKSVSTSKNGKEQTVVAFFHPYCNAGGGGERVLWCALRALQKKYPEAVYVVYTGDINVSGQQILDGAFRRFNIKLAHPVQFVFLRKRYLVEDSRYPHFTLLGQSLGSILLGWEALMQRVPDVYIDSMGYAFTLPLFKYVGGCRVGSYVHYPTISTDMLSVVKNQNPGFNNAAFISRNALLSKAKLIYYYLFAFVYGLVGSCSDIVMVNSSWTLNHILSLWKVGHCTNIVYPPCDVQTFLDIPLHEKKVTPGHLLVSIGQFRPEKNHALQIKAFAKLLNEKAAELGHSLKLVLIGGCRNKDDEFRVNQLRSLSENLGVQENVEFKINISFDELKNYLSEATIGLHTMWNEHFGIGVVECMAAGTVILAHNSGGPKLDIVIPHEGQITGFLAESEEGYADSMAHILSLSAEERLQIRKNARASISRFSDQEFEVAFLCSMEKLLT</sequence>
<accession>Q3TZM9</accession>
<accession>Q6P7W8</accession>
<accession>Q8BL38</accession>